<protein>
    <recommendedName>
        <fullName>Uncharacterized sugar kinase YeiI</fullName>
        <ecNumber>2.7.1.-</ecNumber>
    </recommendedName>
</protein>
<accession>P33020</accession>
<accession>P76443</accession>
<accession>Q2MAR9</accession>
<evidence type="ECO:0000305" key="1"/>
<gene>
    <name type="primary">yeiI</name>
    <name type="ordered locus">b2160</name>
    <name type="ordered locus">JW2147</name>
</gene>
<proteinExistence type="inferred from homology"/>
<reference key="1">
    <citation type="submission" date="1993-10" db="EMBL/GenBank/DDBJ databases">
        <title>Automated multiplex sequencing of the E.coli genome.</title>
        <authorList>
            <person name="Richterich P."/>
            <person name="Lakey N."/>
            <person name="Gryan G."/>
            <person name="Jaehn L."/>
            <person name="Mintz L."/>
            <person name="Robison K."/>
            <person name="Church G.M."/>
        </authorList>
    </citation>
    <scope>NUCLEOTIDE SEQUENCE [LARGE SCALE GENOMIC DNA]</scope>
    <source>
        <strain>K12 / BHB2600</strain>
    </source>
</reference>
<reference key="2">
    <citation type="journal article" date="1997" name="Science">
        <title>The complete genome sequence of Escherichia coli K-12.</title>
        <authorList>
            <person name="Blattner F.R."/>
            <person name="Plunkett G. III"/>
            <person name="Bloch C.A."/>
            <person name="Perna N.T."/>
            <person name="Burland V."/>
            <person name="Riley M."/>
            <person name="Collado-Vides J."/>
            <person name="Glasner J.D."/>
            <person name="Rode C.K."/>
            <person name="Mayhew G.F."/>
            <person name="Gregor J."/>
            <person name="Davis N.W."/>
            <person name="Kirkpatrick H.A."/>
            <person name="Goeden M.A."/>
            <person name="Rose D.J."/>
            <person name="Mau B."/>
            <person name="Shao Y."/>
        </authorList>
    </citation>
    <scope>NUCLEOTIDE SEQUENCE [LARGE SCALE GENOMIC DNA]</scope>
    <source>
        <strain>K12 / MG1655 / ATCC 47076</strain>
    </source>
</reference>
<reference key="3">
    <citation type="journal article" date="2006" name="Mol. Syst. Biol.">
        <title>Highly accurate genome sequences of Escherichia coli K-12 strains MG1655 and W3110.</title>
        <authorList>
            <person name="Hayashi K."/>
            <person name="Morooka N."/>
            <person name="Yamamoto Y."/>
            <person name="Fujita K."/>
            <person name="Isono K."/>
            <person name="Choi S."/>
            <person name="Ohtsubo E."/>
            <person name="Baba T."/>
            <person name="Wanner B.L."/>
            <person name="Mori H."/>
            <person name="Horiuchi T."/>
        </authorList>
    </citation>
    <scope>NUCLEOTIDE SEQUENCE [LARGE SCALE GENOMIC DNA]</scope>
    <source>
        <strain>K12 / W3110 / ATCC 27325 / DSM 5911</strain>
    </source>
</reference>
<reference key="4">
    <citation type="journal article" date="1988" name="J. Bacteriol.">
        <title>Nucleotide sequence of the nfo gene of Escherichia coli K-12.</title>
        <authorList>
            <person name="Saporito S.M."/>
            <person name="Cunningham R.P."/>
        </authorList>
    </citation>
    <scope>NUCLEOTIDE SEQUENCE [GENOMIC DNA] OF 1-26</scope>
    <source>
        <strain>K12</strain>
    </source>
</reference>
<comment type="similarity">
    <text evidence="1">Belongs to the carbohydrate kinase PfkB family.</text>
</comment>
<name>YEII_ECOLI</name>
<dbReference type="EC" id="2.7.1.-"/>
<dbReference type="EMBL" id="U00007">
    <property type="protein sequence ID" value="AAA60512.1"/>
    <property type="molecule type" value="Genomic_DNA"/>
</dbReference>
<dbReference type="EMBL" id="U00096">
    <property type="protein sequence ID" value="AAC75221.1"/>
    <property type="molecule type" value="Genomic_DNA"/>
</dbReference>
<dbReference type="EMBL" id="AP009048">
    <property type="protein sequence ID" value="BAE76637.1"/>
    <property type="molecule type" value="Genomic_DNA"/>
</dbReference>
<dbReference type="EMBL" id="M22591">
    <property type="status" value="NOT_ANNOTATED_CDS"/>
    <property type="molecule type" value="Genomic_DNA"/>
</dbReference>
<dbReference type="PIR" id="G64984">
    <property type="entry name" value="G64984"/>
</dbReference>
<dbReference type="RefSeq" id="NP_416665.1">
    <property type="nucleotide sequence ID" value="NC_000913.3"/>
</dbReference>
<dbReference type="RefSeq" id="WP_001065016.1">
    <property type="nucleotide sequence ID" value="NZ_LN832404.1"/>
</dbReference>
<dbReference type="SMR" id="P33020"/>
<dbReference type="BioGRID" id="4261150">
    <property type="interactions" value="167"/>
</dbReference>
<dbReference type="DIP" id="DIP-11921N"/>
<dbReference type="FunCoup" id="P33020">
    <property type="interactions" value="12"/>
</dbReference>
<dbReference type="IntAct" id="P33020">
    <property type="interactions" value="5"/>
</dbReference>
<dbReference type="STRING" id="511145.b2160"/>
<dbReference type="PaxDb" id="511145-b2160"/>
<dbReference type="EnsemblBacteria" id="AAC75221">
    <property type="protein sequence ID" value="AAC75221"/>
    <property type="gene ID" value="b2160"/>
</dbReference>
<dbReference type="GeneID" id="946640"/>
<dbReference type="KEGG" id="ecj:JW2147"/>
<dbReference type="KEGG" id="eco:b2160"/>
<dbReference type="KEGG" id="ecoc:C3026_12105"/>
<dbReference type="PATRIC" id="fig|1411691.4.peg.79"/>
<dbReference type="EchoBASE" id="EB1963"/>
<dbReference type="eggNOG" id="COG0524">
    <property type="taxonomic scope" value="Bacteria"/>
</dbReference>
<dbReference type="eggNOG" id="COG1522">
    <property type="taxonomic scope" value="Bacteria"/>
</dbReference>
<dbReference type="HOGENOM" id="CLU_027634_11_2_6"/>
<dbReference type="InParanoid" id="P33020"/>
<dbReference type="OMA" id="NPGHINI"/>
<dbReference type="OrthoDB" id="9806249at2"/>
<dbReference type="PhylomeDB" id="P33020"/>
<dbReference type="BioCyc" id="EcoCyc:EG12028-MONOMER"/>
<dbReference type="PRO" id="PR:P33020"/>
<dbReference type="Proteomes" id="UP000000625">
    <property type="component" value="Chromosome"/>
</dbReference>
<dbReference type="GO" id="GO:0016301">
    <property type="term" value="F:kinase activity"/>
    <property type="evidence" value="ECO:0007669"/>
    <property type="project" value="UniProtKB-KW"/>
</dbReference>
<dbReference type="CDD" id="cd01941">
    <property type="entry name" value="YeiC_kinase_like"/>
    <property type="match status" value="1"/>
</dbReference>
<dbReference type="Gene3D" id="3.40.1190.20">
    <property type="match status" value="1"/>
</dbReference>
<dbReference type="Gene3D" id="1.10.10.10">
    <property type="entry name" value="Winged helix-like DNA-binding domain superfamily/Winged helix DNA-binding domain"/>
    <property type="match status" value="1"/>
</dbReference>
<dbReference type="InterPro" id="IPR002173">
    <property type="entry name" value="Carboh/pur_kinase_PfkB_CS"/>
</dbReference>
<dbReference type="InterPro" id="IPR011611">
    <property type="entry name" value="PfkB_dom"/>
</dbReference>
<dbReference type="InterPro" id="IPR029056">
    <property type="entry name" value="Ribokinase-like"/>
</dbReference>
<dbReference type="InterPro" id="IPR036388">
    <property type="entry name" value="WH-like_DNA-bd_sf"/>
</dbReference>
<dbReference type="InterPro" id="IPR036390">
    <property type="entry name" value="WH_DNA-bd_sf"/>
</dbReference>
<dbReference type="NCBIfam" id="NF007416">
    <property type="entry name" value="PRK09954.1"/>
    <property type="match status" value="1"/>
</dbReference>
<dbReference type="PANTHER" id="PTHR10584:SF166">
    <property type="entry name" value="RIBOKINASE"/>
    <property type="match status" value="1"/>
</dbReference>
<dbReference type="PANTHER" id="PTHR10584">
    <property type="entry name" value="SUGAR KINASE"/>
    <property type="match status" value="1"/>
</dbReference>
<dbReference type="Pfam" id="PF13412">
    <property type="entry name" value="HTH_24"/>
    <property type="match status" value="1"/>
</dbReference>
<dbReference type="Pfam" id="PF00294">
    <property type="entry name" value="PfkB"/>
    <property type="match status" value="1"/>
</dbReference>
<dbReference type="SUPFAM" id="SSF53613">
    <property type="entry name" value="Ribokinase-like"/>
    <property type="match status" value="1"/>
</dbReference>
<dbReference type="SUPFAM" id="SSF46785">
    <property type="entry name" value="Winged helix' DNA-binding domain"/>
    <property type="match status" value="1"/>
</dbReference>
<dbReference type="PROSITE" id="PS00583">
    <property type="entry name" value="PFKB_KINASES_1"/>
    <property type="match status" value="1"/>
</dbReference>
<dbReference type="PROSITE" id="PS00584">
    <property type="entry name" value="PFKB_KINASES_2"/>
    <property type="match status" value="1"/>
</dbReference>
<organism>
    <name type="scientific">Escherichia coli (strain K12)</name>
    <dbReference type="NCBI Taxonomy" id="83333"/>
    <lineage>
        <taxon>Bacteria</taxon>
        <taxon>Pseudomonadati</taxon>
        <taxon>Pseudomonadota</taxon>
        <taxon>Gammaproteobacteria</taxon>
        <taxon>Enterobacterales</taxon>
        <taxon>Enterobacteriaceae</taxon>
        <taxon>Escherichia</taxon>
    </lineage>
</organism>
<keyword id="KW-0418">Kinase</keyword>
<keyword id="KW-1185">Reference proteome</keyword>
<keyword id="KW-0808">Transferase</keyword>
<sequence length="362" mass="39710">MNNREKEILAILRRNPLIQQNEIADMLQISRSRVAAHIMDLMRKGRIKGKGYILTEQEYCVVVGTINMDIRGMADIRYPQSASHPGTIHCSAGGVGRNIAHNLALLGRDVHLLSVIGDDFYGEMLLEETRRAGVNVSGCVRLHGQSTSTYLAIANRDDQTVLAINDTHLLEQLTPQLLNGSRDLLRHAGVVLADCNLTAEALEWVFTLADEIPVFVDTVSEFKAGKIKHWLAHIHTLKPTLPELEILWGQAITSDADRNTAVNALHQQGVQQLFVYLPDESVYCSEKDGEQFLLTAPAHTTVDSFGADDGFMAGLVYSFLEGYSFRDSARFAVACAAISRASGSLNNPTLSADNALSLVPMV</sequence>
<feature type="chain" id="PRO_0000080148" description="Uncharacterized sugar kinase YeiI">
    <location>
        <begin position="1"/>
        <end position="362"/>
    </location>
</feature>
<feature type="sequence conflict" description="In Ref. 1; AAA60512." evidence="1" ref="1">
    <original>CAAISRASGSLNNPTLSADNALSLVPMV</original>
    <variation>ARQFRAPAAA</variation>
    <location>
        <begin position="335"/>
        <end position="362"/>
    </location>
</feature>